<evidence type="ECO:0000255" key="1">
    <source>
        <dbReference type="HAMAP-Rule" id="MF_00137"/>
    </source>
</evidence>
<sequence length="254" mass="29125">MNRRHRIYEGKAKILYEGPEPGTYIQFFKDDATAFNAKKHEVIDGKGVLNNRISEHIFSHLGRLGIPTHFIKRINMREQLIKAVEIIPLEVVVRNVAAGSLSKRLGLEEGTVLSQSIIEFYYKNDSLDDPMVTEEHITAFGWAVPQEIEDIMQLSIRINDFLSGLFAAANIQLIDFKMEFGRLWEDEAMRIVLADEISPDSARLWDMQTREKMDKDRFRRNMGGLINAYQEVAKRLGIINENEPPRPSGPVLVK</sequence>
<dbReference type="EC" id="6.3.2.6" evidence="1"/>
<dbReference type="EMBL" id="BX897700">
    <property type="protein sequence ID" value="CAF26231.1"/>
    <property type="molecule type" value="Genomic_DNA"/>
</dbReference>
<dbReference type="RefSeq" id="WP_011179483.1">
    <property type="nucleotide sequence ID" value="NC_005955.1"/>
</dbReference>
<dbReference type="SMR" id="Q6FZJ2"/>
<dbReference type="KEGG" id="bqu:BQ07470"/>
<dbReference type="eggNOG" id="COG0152">
    <property type="taxonomic scope" value="Bacteria"/>
</dbReference>
<dbReference type="HOGENOM" id="CLU_061495_2_0_5"/>
<dbReference type="OrthoDB" id="9801549at2"/>
<dbReference type="UniPathway" id="UPA00074">
    <property type="reaction ID" value="UER00131"/>
</dbReference>
<dbReference type="Proteomes" id="UP000000597">
    <property type="component" value="Chromosome"/>
</dbReference>
<dbReference type="GO" id="GO:0005829">
    <property type="term" value="C:cytosol"/>
    <property type="evidence" value="ECO:0007669"/>
    <property type="project" value="TreeGrafter"/>
</dbReference>
<dbReference type="GO" id="GO:0005524">
    <property type="term" value="F:ATP binding"/>
    <property type="evidence" value="ECO:0007669"/>
    <property type="project" value="UniProtKB-KW"/>
</dbReference>
<dbReference type="GO" id="GO:0004639">
    <property type="term" value="F:phosphoribosylaminoimidazolesuccinocarboxamide synthase activity"/>
    <property type="evidence" value="ECO:0007669"/>
    <property type="project" value="UniProtKB-UniRule"/>
</dbReference>
<dbReference type="GO" id="GO:0006189">
    <property type="term" value="P:'de novo' IMP biosynthetic process"/>
    <property type="evidence" value="ECO:0007669"/>
    <property type="project" value="UniProtKB-UniRule"/>
</dbReference>
<dbReference type="GO" id="GO:0009236">
    <property type="term" value="P:cobalamin biosynthetic process"/>
    <property type="evidence" value="ECO:0007669"/>
    <property type="project" value="InterPro"/>
</dbReference>
<dbReference type="CDD" id="cd01415">
    <property type="entry name" value="SAICAR_synt_PurC"/>
    <property type="match status" value="1"/>
</dbReference>
<dbReference type="FunFam" id="3.30.470.20:FF:000006">
    <property type="entry name" value="Phosphoribosylaminoimidazole-succinocarboxamide synthase"/>
    <property type="match status" value="1"/>
</dbReference>
<dbReference type="Gene3D" id="3.30.470.20">
    <property type="entry name" value="ATP-grasp fold, B domain"/>
    <property type="match status" value="1"/>
</dbReference>
<dbReference type="Gene3D" id="3.30.200.20">
    <property type="entry name" value="Phosphorylase Kinase, domain 1"/>
    <property type="match status" value="1"/>
</dbReference>
<dbReference type="HAMAP" id="MF_00137">
    <property type="entry name" value="SAICAR_synth"/>
    <property type="match status" value="1"/>
</dbReference>
<dbReference type="InterPro" id="IPR028923">
    <property type="entry name" value="SAICAR_synt/ADE2_N"/>
</dbReference>
<dbReference type="InterPro" id="IPR033934">
    <property type="entry name" value="SAICAR_synt_PurC"/>
</dbReference>
<dbReference type="InterPro" id="IPR001636">
    <property type="entry name" value="SAICAR_synth"/>
</dbReference>
<dbReference type="InterPro" id="IPR050089">
    <property type="entry name" value="SAICAR_synthetase"/>
</dbReference>
<dbReference type="InterPro" id="IPR018236">
    <property type="entry name" value="SAICAR_synthetase_CS"/>
</dbReference>
<dbReference type="NCBIfam" id="TIGR00081">
    <property type="entry name" value="purC"/>
    <property type="match status" value="1"/>
</dbReference>
<dbReference type="PANTHER" id="PTHR43599">
    <property type="entry name" value="MULTIFUNCTIONAL PROTEIN ADE2"/>
    <property type="match status" value="1"/>
</dbReference>
<dbReference type="PANTHER" id="PTHR43599:SF3">
    <property type="entry name" value="SI:DKEY-6E2.2"/>
    <property type="match status" value="1"/>
</dbReference>
<dbReference type="Pfam" id="PF01259">
    <property type="entry name" value="SAICAR_synt"/>
    <property type="match status" value="1"/>
</dbReference>
<dbReference type="SUPFAM" id="SSF56104">
    <property type="entry name" value="SAICAR synthase-like"/>
    <property type="match status" value="1"/>
</dbReference>
<dbReference type="PROSITE" id="PS01057">
    <property type="entry name" value="SAICAR_SYNTHETASE_1"/>
    <property type="match status" value="1"/>
</dbReference>
<proteinExistence type="inferred from homology"/>
<comment type="catalytic activity">
    <reaction evidence="1">
        <text>5-amino-1-(5-phospho-D-ribosyl)imidazole-4-carboxylate + L-aspartate + ATP = (2S)-2-[5-amino-1-(5-phospho-beta-D-ribosyl)imidazole-4-carboxamido]succinate + ADP + phosphate + 2 H(+)</text>
        <dbReference type="Rhea" id="RHEA:22628"/>
        <dbReference type="ChEBI" id="CHEBI:15378"/>
        <dbReference type="ChEBI" id="CHEBI:29991"/>
        <dbReference type="ChEBI" id="CHEBI:30616"/>
        <dbReference type="ChEBI" id="CHEBI:43474"/>
        <dbReference type="ChEBI" id="CHEBI:58443"/>
        <dbReference type="ChEBI" id="CHEBI:77657"/>
        <dbReference type="ChEBI" id="CHEBI:456216"/>
        <dbReference type="EC" id="6.3.2.6"/>
    </reaction>
</comment>
<comment type="pathway">
    <text evidence="1">Purine metabolism; IMP biosynthesis via de novo pathway; 5-amino-1-(5-phospho-D-ribosyl)imidazole-4-carboxamide from 5-amino-1-(5-phospho-D-ribosyl)imidazole-4-carboxylate: step 1/2.</text>
</comment>
<comment type="similarity">
    <text evidence="1">Belongs to the SAICAR synthetase family.</text>
</comment>
<name>PUR7_BARQU</name>
<organism>
    <name type="scientific">Bartonella quintana (strain Toulouse)</name>
    <name type="common">Rochalimaea quintana</name>
    <dbReference type="NCBI Taxonomy" id="283165"/>
    <lineage>
        <taxon>Bacteria</taxon>
        <taxon>Pseudomonadati</taxon>
        <taxon>Pseudomonadota</taxon>
        <taxon>Alphaproteobacteria</taxon>
        <taxon>Hyphomicrobiales</taxon>
        <taxon>Bartonellaceae</taxon>
        <taxon>Bartonella</taxon>
    </lineage>
</organism>
<accession>Q6FZJ2</accession>
<keyword id="KW-0067">ATP-binding</keyword>
<keyword id="KW-0436">Ligase</keyword>
<keyword id="KW-0547">Nucleotide-binding</keyword>
<keyword id="KW-0658">Purine biosynthesis</keyword>
<reference key="1">
    <citation type="journal article" date="2004" name="Proc. Natl. Acad. Sci. U.S.A.">
        <title>The louse-borne human pathogen Bartonella quintana is a genomic derivative of the zoonotic agent Bartonella henselae.</title>
        <authorList>
            <person name="Alsmark U.C.M."/>
            <person name="Frank A.C."/>
            <person name="Karlberg E.O."/>
            <person name="Legault B.-A."/>
            <person name="Ardell D.H."/>
            <person name="Canbaeck B."/>
            <person name="Eriksson A.-S."/>
            <person name="Naeslund A.K."/>
            <person name="Handley S.A."/>
            <person name="Huvet M."/>
            <person name="La Scola B."/>
            <person name="Holmberg M."/>
            <person name="Andersson S.G.E."/>
        </authorList>
    </citation>
    <scope>NUCLEOTIDE SEQUENCE [LARGE SCALE GENOMIC DNA]</scope>
    <source>
        <strain>Toulouse</strain>
    </source>
</reference>
<gene>
    <name evidence="1" type="primary">purC</name>
    <name type="ordered locus">BQ07470</name>
</gene>
<protein>
    <recommendedName>
        <fullName evidence="1">Phosphoribosylaminoimidazole-succinocarboxamide synthase</fullName>
        <ecNumber evidence="1">6.3.2.6</ecNumber>
    </recommendedName>
    <alternativeName>
        <fullName evidence="1">SAICAR synthetase</fullName>
    </alternativeName>
</protein>
<feature type="chain" id="PRO_1000018672" description="Phosphoribosylaminoimidazole-succinocarboxamide synthase">
    <location>
        <begin position="1"/>
        <end position="254"/>
    </location>
</feature>